<reference key="1">
    <citation type="journal article" date="2006" name="Proc. Natl. Acad. Sci. U.S.A.">
        <title>The complete genome of Rhodococcus sp. RHA1 provides insights into a catabolic powerhouse.</title>
        <authorList>
            <person name="McLeod M.P."/>
            <person name="Warren R.L."/>
            <person name="Hsiao W.W.L."/>
            <person name="Araki N."/>
            <person name="Myhre M."/>
            <person name="Fernandes C."/>
            <person name="Miyazawa D."/>
            <person name="Wong W."/>
            <person name="Lillquist A.L."/>
            <person name="Wang D."/>
            <person name="Dosanjh M."/>
            <person name="Hara H."/>
            <person name="Petrescu A."/>
            <person name="Morin R.D."/>
            <person name="Yang G."/>
            <person name="Stott J.M."/>
            <person name="Schein J.E."/>
            <person name="Shin H."/>
            <person name="Smailus D."/>
            <person name="Siddiqui A.S."/>
            <person name="Marra M.A."/>
            <person name="Jones S.J.M."/>
            <person name="Holt R."/>
            <person name="Brinkman F.S.L."/>
            <person name="Miyauchi K."/>
            <person name="Fukuda M."/>
            <person name="Davies J.E."/>
            <person name="Mohn W.W."/>
            <person name="Eltis L.D."/>
        </authorList>
    </citation>
    <scope>NUCLEOTIDE SEQUENCE [LARGE SCALE GENOMIC DNA]</scope>
    <source>
        <strain>RHA1</strain>
    </source>
</reference>
<feature type="chain" id="PRO_0000258565" description="Small ribosomal subunit protein uS10">
    <location>
        <begin position="1"/>
        <end position="101"/>
    </location>
</feature>
<name>RS10_RHOJR</name>
<keyword id="KW-0687">Ribonucleoprotein</keyword>
<keyword id="KW-0689">Ribosomal protein</keyword>
<protein>
    <recommendedName>
        <fullName evidence="1">Small ribosomal subunit protein uS10</fullName>
    </recommendedName>
    <alternativeName>
        <fullName evidence="2">30S ribosomal protein S10</fullName>
    </alternativeName>
</protein>
<organism>
    <name type="scientific">Rhodococcus jostii (strain RHA1)</name>
    <dbReference type="NCBI Taxonomy" id="101510"/>
    <lineage>
        <taxon>Bacteria</taxon>
        <taxon>Bacillati</taxon>
        <taxon>Actinomycetota</taxon>
        <taxon>Actinomycetes</taxon>
        <taxon>Mycobacteriales</taxon>
        <taxon>Nocardiaceae</taxon>
        <taxon>Rhodococcus</taxon>
    </lineage>
</organism>
<comment type="function">
    <text evidence="1">Involved in the binding of tRNA to the ribosomes.</text>
</comment>
<comment type="subunit">
    <text evidence="1">Part of the 30S ribosomal subunit.</text>
</comment>
<comment type="similarity">
    <text evidence="1">Belongs to the universal ribosomal protein uS10 family.</text>
</comment>
<gene>
    <name evidence="1" type="primary">rpsJ</name>
    <name type="ordered locus">RHA1_ro06132</name>
</gene>
<proteinExistence type="inferred from homology"/>
<accession>Q0S3H7</accession>
<sequence>MAGQKIRIRLKAYDHEAIDASARKIVETVTRTGARVVGPVPLPTEKNVYCVIRSPHKYKDSREHFEMRTHKRLIDILDPTPKTVDALMRIDLPASVDVNIQ</sequence>
<evidence type="ECO:0000255" key="1">
    <source>
        <dbReference type="HAMAP-Rule" id="MF_00508"/>
    </source>
</evidence>
<evidence type="ECO:0000305" key="2"/>
<dbReference type="EMBL" id="CP000431">
    <property type="protein sequence ID" value="ABG97909.1"/>
    <property type="molecule type" value="Genomic_DNA"/>
</dbReference>
<dbReference type="RefSeq" id="WP_003938093.1">
    <property type="nucleotide sequence ID" value="NC_008268.1"/>
</dbReference>
<dbReference type="SMR" id="Q0S3H7"/>
<dbReference type="GeneID" id="98053541"/>
<dbReference type="KEGG" id="rha:RHA1_ro06132"/>
<dbReference type="eggNOG" id="COG0051">
    <property type="taxonomic scope" value="Bacteria"/>
</dbReference>
<dbReference type="HOGENOM" id="CLU_122625_1_3_11"/>
<dbReference type="OrthoDB" id="9804464at2"/>
<dbReference type="Proteomes" id="UP000008710">
    <property type="component" value="Chromosome"/>
</dbReference>
<dbReference type="GO" id="GO:1990904">
    <property type="term" value="C:ribonucleoprotein complex"/>
    <property type="evidence" value="ECO:0007669"/>
    <property type="project" value="UniProtKB-KW"/>
</dbReference>
<dbReference type="GO" id="GO:0005840">
    <property type="term" value="C:ribosome"/>
    <property type="evidence" value="ECO:0007669"/>
    <property type="project" value="UniProtKB-KW"/>
</dbReference>
<dbReference type="GO" id="GO:0003735">
    <property type="term" value="F:structural constituent of ribosome"/>
    <property type="evidence" value="ECO:0007669"/>
    <property type="project" value="InterPro"/>
</dbReference>
<dbReference type="GO" id="GO:0000049">
    <property type="term" value="F:tRNA binding"/>
    <property type="evidence" value="ECO:0007669"/>
    <property type="project" value="UniProtKB-UniRule"/>
</dbReference>
<dbReference type="GO" id="GO:0006412">
    <property type="term" value="P:translation"/>
    <property type="evidence" value="ECO:0007669"/>
    <property type="project" value="UniProtKB-UniRule"/>
</dbReference>
<dbReference type="FunFam" id="3.30.70.600:FF:000001">
    <property type="entry name" value="30S ribosomal protein S10"/>
    <property type="match status" value="1"/>
</dbReference>
<dbReference type="Gene3D" id="3.30.70.600">
    <property type="entry name" value="Ribosomal protein S10 domain"/>
    <property type="match status" value="1"/>
</dbReference>
<dbReference type="HAMAP" id="MF_00508">
    <property type="entry name" value="Ribosomal_uS10"/>
    <property type="match status" value="1"/>
</dbReference>
<dbReference type="InterPro" id="IPR001848">
    <property type="entry name" value="Ribosomal_uS10"/>
</dbReference>
<dbReference type="InterPro" id="IPR018268">
    <property type="entry name" value="Ribosomal_uS10_CS"/>
</dbReference>
<dbReference type="InterPro" id="IPR027486">
    <property type="entry name" value="Ribosomal_uS10_dom"/>
</dbReference>
<dbReference type="InterPro" id="IPR036838">
    <property type="entry name" value="Ribosomal_uS10_dom_sf"/>
</dbReference>
<dbReference type="NCBIfam" id="NF001861">
    <property type="entry name" value="PRK00596.1"/>
    <property type="match status" value="1"/>
</dbReference>
<dbReference type="NCBIfam" id="TIGR01049">
    <property type="entry name" value="rpsJ_bact"/>
    <property type="match status" value="1"/>
</dbReference>
<dbReference type="PANTHER" id="PTHR11700">
    <property type="entry name" value="30S RIBOSOMAL PROTEIN S10 FAMILY MEMBER"/>
    <property type="match status" value="1"/>
</dbReference>
<dbReference type="Pfam" id="PF00338">
    <property type="entry name" value="Ribosomal_S10"/>
    <property type="match status" value="1"/>
</dbReference>
<dbReference type="PRINTS" id="PR00971">
    <property type="entry name" value="RIBOSOMALS10"/>
</dbReference>
<dbReference type="SMART" id="SM01403">
    <property type="entry name" value="Ribosomal_S10"/>
    <property type="match status" value="1"/>
</dbReference>
<dbReference type="SUPFAM" id="SSF54999">
    <property type="entry name" value="Ribosomal protein S10"/>
    <property type="match status" value="1"/>
</dbReference>
<dbReference type="PROSITE" id="PS00361">
    <property type="entry name" value="RIBOSOMAL_S10"/>
    <property type="match status" value="1"/>
</dbReference>